<accession>Q5R0Q7</accession>
<evidence type="ECO:0000255" key="1">
    <source>
        <dbReference type="HAMAP-Rule" id="MF_01161"/>
    </source>
</evidence>
<name>TILS_IDILO</name>
<organism>
    <name type="scientific">Idiomarina loihiensis (strain ATCC BAA-735 / DSM 15497 / L2-TR)</name>
    <dbReference type="NCBI Taxonomy" id="283942"/>
    <lineage>
        <taxon>Bacteria</taxon>
        <taxon>Pseudomonadati</taxon>
        <taxon>Pseudomonadota</taxon>
        <taxon>Gammaproteobacteria</taxon>
        <taxon>Alteromonadales</taxon>
        <taxon>Idiomarinaceae</taxon>
        <taxon>Idiomarina</taxon>
    </lineage>
</organism>
<sequence>MMKDGLYDLFCESLESLALKPGQQLVAALGGGADSQTILDLLMRFRQQNPQYQYLAIHLDHSFHPSSADWSSTIEHAAKSYGVKTVFEPLNVPIENRQSKEAAGRESRYRRMAELTEDDAVLLLGQHRNDQIETFFLQLKRGSGPKGLSSMAAIQPWVGSRRLCRPLLSVSKEDILSYAQQQKLTWIEDDTNYDTRIERNFLRHKVVPLLEQRWPQFGNSVLRSAKLCAEQQQVMDELLQEKLYKAQKHKSHFPLSLLSEHSAAMQRALLRVWLQGQEYSLPSYEQLEQIRLQAQSATDDSQMQVQCDGYSVRYFQYALWCDNNTGQLPADCWLAEANVNLGEWGTLSVPDALLTNNNELRLTFSLTSEKLAKPGRQGRKKLKDWLKQAGIPPWLRARRPILELNGKYVWVAGLGWFSYQVIEKTEFDSLQLPEPDWVSSGADSYRQL</sequence>
<reference key="1">
    <citation type="journal article" date="2004" name="Proc. Natl. Acad. Sci. U.S.A.">
        <title>Genome sequence of the deep-sea gamma-proteobacterium Idiomarina loihiensis reveals amino acid fermentation as a source of carbon and energy.</title>
        <authorList>
            <person name="Hou S."/>
            <person name="Saw J.H."/>
            <person name="Lee K.S."/>
            <person name="Freitas T.A."/>
            <person name="Belisle C."/>
            <person name="Kawarabayasi Y."/>
            <person name="Donachie S.P."/>
            <person name="Pikina A."/>
            <person name="Galperin M.Y."/>
            <person name="Koonin E.V."/>
            <person name="Makarova K.S."/>
            <person name="Omelchenko M.V."/>
            <person name="Sorokin A."/>
            <person name="Wolf Y.I."/>
            <person name="Li Q.X."/>
            <person name="Keum Y.S."/>
            <person name="Campbell S."/>
            <person name="Denery J."/>
            <person name="Aizawa S."/>
            <person name="Shibata S."/>
            <person name="Malahoff A."/>
            <person name="Alam M."/>
        </authorList>
    </citation>
    <scope>NUCLEOTIDE SEQUENCE [LARGE SCALE GENOMIC DNA]</scope>
    <source>
        <strain>ATCC BAA-735 / DSM 15497 / L2-TR</strain>
    </source>
</reference>
<proteinExistence type="inferred from homology"/>
<comment type="function">
    <text evidence="1">Ligates lysine onto the cytidine present at position 34 of the AUA codon-specific tRNA(Ile) that contains the anticodon CAU, in an ATP-dependent manner. Cytidine is converted to lysidine, thus changing the amino acid specificity of the tRNA from methionine to isoleucine.</text>
</comment>
<comment type="catalytic activity">
    <reaction evidence="1">
        <text>cytidine(34) in tRNA(Ile2) + L-lysine + ATP = lysidine(34) in tRNA(Ile2) + AMP + diphosphate + H(+)</text>
        <dbReference type="Rhea" id="RHEA:43744"/>
        <dbReference type="Rhea" id="RHEA-COMP:10625"/>
        <dbReference type="Rhea" id="RHEA-COMP:10670"/>
        <dbReference type="ChEBI" id="CHEBI:15378"/>
        <dbReference type="ChEBI" id="CHEBI:30616"/>
        <dbReference type="ChEBI" id="CHEBI:32551"/>
        <dbReference type="ChEBI" id="CHEBI:33019"/>
        <dbReference type="ChEBI" id="CHEBI:82748"/>
        <dbReference type="ChEBI" id="CHEBI:83665"/>
        <dbReference type="ChEBI" id="CHEBI:456215"/>
        <dbReference type="EC" id="6.3.4.19"/>
    </reaction>
</comment>
<comment type="subcellular location">
    <subcellularLocation>
        <location evidence="1">Cytoplasm</location>
    </subcellularLocation>
</comment>
<comment type="domain">
    <text>The N-terminal region contains the highly conserved SGGXDS motif, predicted to be a P-loop motif involved in ATP binding.</text>
</comment>
<comment type="similarity">
    <text evidence="1">Belongs to the tRNA(Ile)-lysidine synthase family.</text>
</comment>
<keyword id="KW-0067">ATP-binding</keyword>
<keyword id="KW-0963">Cytoplasm</keyword>
<keyword id="KW-0436">Ligase</keyword>
<keyword id="KW-0547">Nucleotide-binding</keyword>
<keyword id="KW-1185">Reference proteome</keyword>
<keyword id="KW-0819">tRNA processing</keyword>
<feature type="chain" id="PRO_0000181706" description="tRNA(Ile)-lysidine synthase">
    <location>
        <begin position="1"/>
        <end position="448"/>
    </location>
</feature>
<feature type="binding site" evidence="1">
    <location>
        <begin position="30"/>
        <end position="35"/>
    </location>
    <ligand>
        <name>ATP</name>
        <dbReference type="ChEBI" id="CHEBI:30616"/>
    </ligand>
</feature>
<protein>
    <recommendedName>
        <fullName evidence="1">tRNA(Ile)-lysidine synthase</fullName>
        <ecNumber evidence="1">6.3.4.19</ecNumber>
    </recommendedName>
    <alternativeName>
        <fullName evidence="1">tRNA(Ile)-2-lysyl-cytidine synthase</fullName>
    </alternativeName>
    <alternativeName>
        <fullName evidence="1">tRNA(Ile)-lysidine synthetase</fullName>
    </alternativeName>
</protein>
<dbReference type="EC" id="6.3.4.19" evidence="1"/>
<dbReference type="EMBL" id="AE017340">
    <property type="protein sequence ID" value="AAV82520.1"/>
    <property type="molecule type" value="Genomic_DNA"/>
</dbReference>
<dbReference type="RefSeq" id="WP_011234923.1">
    <property type="nucleotide sequence ID" value="NC_006512.1"/>
</dbReference>
<dbReference type="SMR" id="Q5R0Q7"/>
<dbReference type="STRING" id="283942.IL1687"/>
<dbReference type="GeneID" id="41336860"/>
<dbReference type="KEGG" id="ilo:IL1687"/>
<dbReference type="eggNOG" id="COG0037">
    <property type="taxonomic scope" value="Bacteria"/>
</dbReference>
<dbReference type="HOGENOM" id="CLU_018869_2_0_6"/>
<dbReference type="OrthoDB" id="9807403at2"/>
<dbReference type="Proteomes" id="UP000001171">
    <property type="component" value="Chromosome"/>
</dbReference>
<dbReference type="GO" id="GO:0005737">
    <property type="term" value="C:cytoplasm"/>
    <property type="evidence" value="ECO:0007669"/>
    <property type="project" value="UniProtKB-SubCell"/>
</dbReference>
<dbReference type="GO" id="GO:0005524">
    <property type="term" value="F:ATP binding"/>
    <property type="evidence" value="ECO:0007669"/>
    <property type="project" value="UniProtKB-KW"/>
</dbReference>
<dbReference type="GO" id="GO:0032267">
    <property type="term" value="F:tRNA(Ile)-lysidine synthase activity"/>
    <property type="evidence" value="ECO:0007669"/>
    <property type="project" value="UniProtKB-EC"/>
</dbReference>
<dbReference type="GO" id="GO:0006400">
    <property type="term" value="P:tRNA modification"/>
    <property type="evidence" value="ECO:0007669"/>
    <property type="project" value="UniProtKB-UniRule"/>
</dbReference>
<dbReference type="CDD" id="cd01992">
    <property type="entry name" value="TilS_N"/>
    <property type="match status" value="1"/>
</dbReference>
<dbReference type="Gene3D" id="1.20.59.20">
    <property type="match status" value="1"/>
</dbReference>
<dbReference type="Gene3D" id="3.40.50.620">
    <property type="entry name" value="HUPs"/>
    <property type="match status" value="1"/>
</dbReference>
<dbReference type="HAMAP" id="MF_01161">
    <property type="entry name" value="tRNA_Ile_lys_synt"/>
    <property type="match status" value="1"/>
</dbReference>
<dbReference type="InterPro" id="IPR012796">
    <property type="entry name" value="Lysidine-tRNA-synth_C"/>
</dbReference>
<dbReference type="InterPro" id="IPR014729">
    <property type="entry name" value="Rossmann-like_a/b/a_fold"/>
</dbReference>
<dbReference type="InterPro" id="IPR011063">
    <property type="entry name" value="TilS/TtcA_N"/>
</dbReference>
<dbReference type="InterPro" id="IPR012094">
    <property type="entry name" value="tRNA_Ile_lys_synt"/>
</dbReference>
<dbReference type="InterPro" id="IPR012795">
    <property type="entry name" value="tRNA_Ile_lys_synt_N"/>
</dbReference>
<dbReference type="InterPro" id="IPR015262">
    <property type="entry name" value="tRNA_Ile_lys_synt_subst-bd"/>
</dbReference>
<dbReference type="NCBIfam" id="TIGR02433">
    <property type="entry name" value="lysidine_TilS_C"/>
    <property type="match status" value="1"/>
</dbReference>
<dbReference type="NCBIfam" id="TIGR02432">
    <property type="entry name" value="lysidine_TilS_N"/>
    <property type="match status" value="1"/>
</dbReference>
<dbReference type="PANTHER" id="PTHR43033">
    <property type="entry name" value="TRNA(ILE)-LYSIDINE SYNTHASE-RELATED"/>
    <property type="match status" value="1"/>
</dbReference>
<dbReference type="PANTHER" id="PTHR43033:SF1">
    <property type="entry name" value="TRNA(ILE)-LYSIDINE SYNTHASE-RELATED"/>
    <property type="match status" value="1"/>
</dbReference>
<dbReference type="Pfam" id="PF01171">
    <property type="entry name" value="ATP_bind_3"/>
    <property type="match status" value="1"/>
</dbReference>
<dbReference type="Pfam" id="PF09179">
    <property type="entry name" value="TilS"/>
    <property type="match status" value="1"/>
</dbReference>
<dbReference type="Pfam" id="PF11734">
    <property type="entry name" value="TilS_C"/>
    <property type="match status" value="1"/>
</dbReference>
<dbReference type="SMART" id="SM00977">
    <property type="entry name" value="TilS_C"/>
    <property type="match status" value="1"/>
</dbReference>
<dbReference type="SUPFAM" id="SSF52402">
    <property type="entry name" value="Adenine nucleotide alpha hydrolases-like"/>
    <property type="match status" value="1"/>
</dbReference>
<dbReference type="SUPFAM" id="SSF82829">
    <property type="entry name" value="MesJ substrate recognition domain-like"/>
    <property type="match status" value="1"/>
</dbReference>
<dbReference type="SUPFAM" id="SSF56037">
    <property type="entry name" value="PheT/TilS domain"/>
    <property type="match status" value="1"/>
</dbReference>
<gene>
    <name evidence="1" type="primary">tilS</name>
    <name type="ordered locus">IL1687</name>
</gene>